<keyword id="KW-0963">Cytoplasm</keyword>
<keyword id="KW-0479">Metal-binding</keyword>
<keyword id="KW-0862">Zinc</keyword>
<feature type="chain" id="PRO_1000046507" description="Protein SprT-like">
    <location>
        <begin position="1"/>
        <end position="152"/>
    </location>
</feature>
<feature type="domain" description="SprT-like" evidence="1">
    <location>
        <begin position="7"/>
        <end position="148"/>
    </location>
</feature>
<feature type="active site" evidence="1">
    <location>
        <position position="68"/>
    </location>
</feature>
<feature type="binding site" evidence="1">
    <location>
        <position position="67"/>
    </location>
    <ligand>
        <name>Zn(2+)</name>
        <dbReference type="ChEBI" id="CHEBI:29105"/>
    </ligand>
</feature>
<feature type="binding site" evidence="1">
    <location>
        <position position="71"/>
    </location>
    <ligand>
        <name>Zn(2+)</name>
        <dbReference type="ChEBI" id="CHEBI:29105"/>
    </ligand>
</feature>
<accession>Q73ET1</accession>
<organism>
    <name type="scientific">Bacillus cereus (strain ATCC 10987 / NRS 248)</name>
    <dbReference type="NCBI Taxonomy" id="222523"/>
    <lineage>
        <taxon>Bacteria</taxon>
        <taxon>Bacillati</taxon>
        <taxon>Bacillota</taxon>
        <taxon>Bacilli</taxon>
        <taxon>Bacillales</taxon>
        <taxon>Bacillaceae</taxon>
        <taxon>Bacillus</taxon>
        <taxon>Bacillus cereus group</taxon>
    </lineage>
</organism>
<name>SPRTL_BACC1</name>
<dbReference type="EMBL" id="AE017194">
    <property type="protein sequence ID" value="AAS39213.1"/>
    <property type="molecule type" value="Genomic_DNA"/>
</dbReference>
<dbReference type="KEGG" id="bca:BCE_0277"/>
<dbReference type="HOGENOM" id="CLU_123820_0_0_9"/>
<dbReference type="Proteomes" id="UP000002527">
    <property type="component" value="Chromosome"/>
</dbReference>
<dbReference type="GO" id="GO:0005737">
    <property type="term" value="C:cytoplasm"/>
    <property type="evidence" value="ECO:0007669"/>
    <property type="project" value="UniProtKB-SubCell"/>
</dbReference>
<dbReference type="GO" id="GO:0008270">
    <property type="term" value="F:zinc ion binding"/>
    <property type="evidence" value="ECO:0007669"/>
    <property type="project" value="UniProtKB-UniRule"/>
</dbReference>
<dbReference type="GO" id="GO:0006950">
    <property type="term" value="P:response to stress"/>
    <property type="evidence" value="ECO:0007669"/>
    <property type="project" value="UniProtKB-ARBA"/>
</dbReference>
<dbReference type="HAMAP" id="MF_00745">
    <property type="entry name" value="SprT_like"/>
    <property type="match status" value="1"/>
</dbReference>
<dbReference type="InterPro" id="IPR006640">
    <property type="entry name" value="SprT-like_domain"/>
</dbReference>
<dbReference type="InterPro" id="IPR035240">
    <property type="entry name" value="SprT_Zn_ribbon"/>
</dbReference>
<dbReference type="InterPro" id="IPR023524">
    <property type="entry name" value="Uncharacterised_SprT-like"/>
</dbReference>
<dbReference type="NCBIfam" id="NF003339">
    <property type="entry name" value="PRK04351.1"/>
    <property type="match status" value="1"/>
</dbReference>
<dbReference type="Pfam" id="PF10263">
    <property type="entry name" value="SprT-like"/>
    <property type="match status" value="1"/>
</dbReference>
<dbReference type="Pfam" id="PF17283">
    <property type="entry name" value="Zn_ribbon_SprT"/>
    <property type="match status" value="1"/>
</dbReference>
<dbReference type="SMART" id="SM00731">
    <property type="entry name" value="SprT"/>
    <property type="match status" value="1"/>
</dbReference>
<gene>
    <name type="ordered locus">BCE_0277</name>
</gene>
<protein>
    <recommendedName>
        <fullName evidence="1">Protein SprT-like</fullName>
    </recommendedName>
</protein>
<sequence length="152" mass="18368">MDEQEIQRLVEEVSLQYFGMPFLHKALFNSRLRTTGGRYLLNTHNIELNYRYYEMYGKEELVGIVKHELCHYHLHITGRGYKHRDKDFRELLKAVDAPRFCKRMMNEEKEKKVYMYECMGCSLQYVRRRQINTKRYVCGKCKGKLILIKKTS</sequence>
<evidence type="ECO:0000255" key="1">
    <source>
        <dbReference type="HAMAP-Rule" id="MF_00745"/>
    </source>
</evidence>
<proteinExistence type="inferred from homology"/>
<reference key="1">
    <citation type="journal article" date="2004" name="Nucleic Acids Res.">
        <title>The genome sequence of Bacillus cereus ATCC 10987 reveals metabolic adaptations and a large plasmid related to Bacillus anthracis pXO1.</title>
        <authorList>
            <person name="Rasko D.A."/>
            <person name="Ravel J."/>
            <person name="Oekstad O.A."/>
            <person name="Helgason E."/>
            <person name="Cer R.Z."/>
            <person name="Jiang L."/>
            <person name="Shores K.A."/>
            <person name="Fouts D.E."/>
            <person name="Tourasse N.J."/>
            <person name="Angiuoli S.V."/>
            <person name="Kolonay J.F."/>
            <person name="Nelson W.C."/>
            <person name="Kolstoe A.-B."/>
            <person name="Fraser C.M."/>
            <person name="Read T.D."/>
        </authorList>
    </citation>
    <scope>NUCLEOTIDE SEQUENCE [LARGE SCALE GENOMIC DNA]</scope>
    <source>
        <strain>ATCC 10987 / NRS 248</strain>
    </source>
</reference>
<comment type="cofactor">
    <cofactor evidence="1">
        <name>Zn(2+)</name>
        <dbReference type="ChEBI" id="CHEBI:29105"/>
    </cofactor>
    <text evidence="1">Binds 1 zinc ion.</text>
</comment>
<comment type="subcellular location">
    <subcellularLocation>
        <location evidence="1">Cytoplasm</location>
    </subcellularLocation>
</comment>
<comment type="similarity">
    <text evidence="1">Belongs to the SprT family.</text>
</comment>